<organism>
    <name type="scientific">Salmonella paratyphi B (strain ATCC BAA-1250 / SPB7)</name>
    <dbReference type="NCBI Taxonomy" id="1016998"/>
    <lineage>
        <taxon>Bacteria</taxon>
        <taxon>Pseudomonadati</taxon>
        <taxon>Pseudomonadota</taxon>
        <taxon>Gammaproteobacteria</taxon>
        <taxon>Enterobacterales</taxon>
        <taxon>Enterobacteriaceae</taxon>
        <taxon>Salmonella</taxon>
    </lineage>
</organism>
<sequence>MSLFDKKHLVTQADALPGRNTPMPIATLHAVNEHSMTNVPAGMEIAYFAMGCFWGVERLFWQLPGVYSTAAGYAGGYTPNPTYREVCSGQTGHAEAVRIVYDPAVISYEQLLQIFWENHDPTQGMQQGNDHGTQYRSAIYPLTPEQNAAAHASCERFQSAMAAAGDHRPITTEIAHATPFYYAEDEHQQYLHKNPYGYCGIGGIGVCLPPDA</sequence>
<feature type="chain" id="PRO_1000087359" description="Peptide methionine sulfoxide reductase MsrA">
    <location>
        <begin position="1"/>
        <end position="212"/>
    </location>
</feature>
<feature type="active site" evidence="1">
    <location>
        <position position="52"/>
    </location>
</feature>
<gene>
    <name evidence="1" type="primary">msrA</name>
    <name type="ordered locus">SPAB_05548</name>
</gene>
<keyword id="KW-0560">Oxidoreductase</keyword>
<evidence type="ECO:0000255" key="1">
    <source>
        <dbReference type="HAMAP-Rule" id="MF_01401"/>
    </source>
</evidence>
<reference key="1">
    <citation type="submission" date="2007-11" db="EMBL/GenBank/DDBJ databases">
        <authorList>
            <consortium name="The Salmonella enterica serovar Paratyphi B Genome Sequencing Project"/>
            <person name="McClelland M."/>
            <person name="Sanderson E.K."/>
            <person name="Porwollik S."/>
            <person name="Spieth J."/>
            <person name="Clifton W.S."/>
            <person name="Fulton R."/>
            <person name="Cordes M."/>
            <person name="Wollam A."/>
            <person name="Shah N."/>
            <person name="Pepin K."/>
            <person name="Bhonagiri V."/>
            <person name="Nash W."/>
            <person name="Johnson M."/>
            <person name="Thiruvilangam P."/>
            <person name="Wilson R."/>
        </authorList>
    </citation>
    <scope>NUCLEOTIDE SEQUENCE [LARGE SCALE GENOMIC DNA]</scope>
    <source>
        <strain>ATCC BAA-1250 / SPB7</strain>
    </source>
</reference>
<dbReference type="EC" id="1.8.4.11" evidence="1"/>
<dbReference type="EMBL" id="CP000886">
    <property type="protein sequence ID" value="ABX70817.1"/>
    <property type="molecule type" value="Genomic_DNA"/>
</dbReference>
<dbReference type="RefSeq" id="WP_000051470.1">
    <property type="nucleotide sequence ID" value="NC_010102.1"/>
</dbReference>
<dbReference type="SMR" id="A9N540"/>
<dbReference type="KEGG" id="spq:SPAB_05548"/>
<dbReference type="PATRIC" id="fig|1016998.12.peg.5201"/>
<dbReference type="HOGENOM" id="CLU_031040_10_3_6"/>
<dbReference type="BioCyc" id="SENT1016998:SPAB_RS22660-MONOMER"/>
<dbReference type="Proteomes" id="UP000008556">
    <property type="component" value="Chromosome"/>
</dbReference>
<dbReference type="GO" id="GO:0005737">
    <property type="term" value="C:cytoplasm"/>
    <property type="evidence" value="ECO:0007669"/>
    <property type="project" value="TreeGrafter"/>
</dbReference>
<dbReference type="GO" id="GO:0036456">
    <property type="term" value="F:L-methionine-(S)-S-oxide reductase activity"/>
    <property type="evidence" value="ECO:0007669"/>
    <property type="project" value="TreeGrafter"/>
</dbReference>
<dbReference type="GO" id="GO:0008113">
    <property type="term" value="F:peptide-methionine (S)-S-oxide reductase activity"/>
    <property type="evidence" value="ECO:0007669"/>
    <property type="project" value="UniProtKB-UniRule"/>
</dbReference>
<dbReference type="GO" id="GO:0034599">
    <property type="term" value="P:cellular response to oxidative stress"/>
    <property type="evidence" value="ECO:0007669"/>
    <property type="project" value="TreeGrafter"/>
</dbReference>
<dbReference type="GO" id="GO:0036211">
    <property type="term" value="P:protein modification process"/>
    <property type="evidence" value="ECO:0007669"/>
    <property type="project" value="UniProtKB-UniRule"/>
</dbReference>
<dbReference type="FunFam" id="3.30.1060.10:FF:000001">
    <property type="entry name" value="Peptide methionine sulfoxide reductase MsrA"/>
    <property type="match status" value="1"/>
</dbReference>
<dbReference type="Gene3D" id="3.30.1060.10">
    <property type="entry name" value="Peptide methionine sulphoxide reductase MsrA"/>
    <property type="match status" value="1"/>
</dbReference>
<dbReference type="HAMAP" id="MF_01401">
    <property type="entry name" value="MsrA"/>
    <property type="match status" value="1"/>
</dbReference>
<dbReference type="InterPro" id="IPR002569">
    <property type="entry name" value="Met_Sox_Rdtase_MsrA_dom"/>
</dbReference>
<dbReference type="InterPro" id="IPR036509">
    <property type="entry name" value="Met_Sox_Rdtase_MsrA_sf"/>
</dbReference>
<dbReference type="InterPro" id="IPR050162">
    <property type="entry name" value="MsrA_MetSO_reductase"/>
</dbReference>
<dbReference type="NCBIfam" id="TIGR00401">
    <property type="entry name" value="msrA"/>
    <property type="match status" value="1"/>
</dbReference>
<dbReference type="PANTHER" id="PTHR42799">
    <property type="entry name" value="MITOCHONDRIAL PEPTIDE METHIONINE SULFOXIDE REDUCTASE"/>
    <property type="match status" value="1"/>
</dbReference>
<dbReference type="PANTHER" id="PTHR42799:SF2">
    <property type="entry name" value="MITOCHONDRIAL PEPTIDE METHIONINE SULFOXIDE REDUCTASE"/>
    <property type="match status" value="1"/>
</dbReference>
<dbReference type="Pfam" id="PF01625">
    <property type="entry name" value="PMSR"/>
    <property type="match status" value="1"/>
</dbReference>
<dbReference type="SUPFAM" id="SSF55068">
    <property type="entry name" value="Peptide methionine sulfoxide reductase"/>
    <property type="match status" value="1"/>
</dbReference>
<proteinExistence type="inferred from homology"/>
<name>MSRA_SALPB</name>
<accession>A9N540</accession>
<comment type="function">
    <text evidence="1">Has an important function as a repair enzyme for proteins that have been inactivated by oxidation. Catalyzes the reversible oxidation-reduction of methionine sulfoxide in proteins to methionine.</text>
</comment>
<comment type="catalytic activity">
    <reaction evidence="1">
        <text>L-methionyl-[protein] + [thioredoxin]-disulfide + H2O = L-methionyl-(S)-S-oxide-[protein] + [thioredoxin]-dithiol</text>
        <dbReference type="Rhea" id="RHEA:14217"/>
        <dbReference type="Rhea" id="RHEA-COMP:10698"/>
        <dbReference type="Rhea" id="RHEA-COMP:10700"/>
        <dbReference type="Rhea" id="RHEA-COMP:12313"/>
        <dbReference type="Rhea" id="RHEA-COMP:12315"/>
        <dbReference type="ChEBI" id="CHEBI:15377"/>
        <dbReference type="ChEBI" id="CHEBI:16044"/>
        <dbReference type="ChEBI" id="CHEBI:29950"/>
        <dbReference type="ChEBI" id="CHEBI:44120"/>
        <dbReference type="ChEBI" id="CHEBI:50058"/>
        <dbReference type="EC" id="1.8.4.11"/>
    </reaction>
</comment>
<comment type="catalytic activity">
    <reaction evidence="1">
        <text>[thioredoxin]-disulfide + L-methionine + H2O = L-methionine (S)-S-oxide + [thioredoxin]-dithiol</text>
        <dbReference type="Rhea" id="RHEA:19993"/>
        <dbReference type="Rhea" id="RHEA-COMP:10698"/>
        <dbReference type="Rhea" id="RHEA-COMP:10700"/>
        <dbReference type="ChEBI" id="CHEBI:15377"/>
        <dbReference type="ChEBI" id="CHEBI:29950"/>
        <dbReference type="ChEBI" id="CHEBI:50058"/>
        <dbReference type="ChEBI" id="CHEBI:57844"/>
        <dbReference type="ChEBI" id="CHEBI:58772"/>
        <dbReference type="EC" id="1.8.4.11"/>
    </reaction>
</comment>
<comment type="similarity">
    <text evidence="1">Belongs to the MsrA Met sulfoxide reductase family.</text>
</comment>
<protein>
    <recommendedName>
        <fullName evidence="1">Peptide methionine sulfoxide reductase MsrA</fullName>
        <shortName evidence="1">Protein-methionine-S-oxide reductase</shortName>
        <ecNumber evidence="1">1.8.4.11</ecNumber>
    </recommendedName>
    <alternativeName>
        <fullName evidence="1">Peptide-methionine (S)-S-oxide reductase</fullName>
        <shortName evidence="1">Peptide Met(O) reductase</shortName>
    </alternativeName>
</protein>